<accession>Q884P3</accession>
<protein>
    <recommendedName>
        <fullName evidence="1">Methylthioribulose-1-phosphate dehydratase</fullName>
        <shortName evidence="1">MTRu-1-P dehydratase</shortName>
        <ecNumber evidence="1">4.2.1.109</ecNumber>
    </recommendedName>
</protein>
<proteinExistence type="inferred from homology"/>
<reference key="1">
    <citation type="journal article" date="2003" name="Proc. Natl. Acad. Sci. U.S.A.">
        <title>The complete genome sequence of the Arabidopsis and tomato pathogen Pseudomonas syringae pv. tomato DC3000.</title>
        <authorList>
            <person name="Buell C.R."/>
            <person name="Joardar V."/>
            <person name="Lindeberg M."/>
            <person name="Selengut J."/>
            <person name="Paulsen I.T."/>
            <person name="Gwinn M.L."/>
            <person name="Dodson R.J."/>
            <person name="DeBoy R.T."/>
            <person name="Durkin A.S."/>
            <person name="Kolonay J.F."/>
            <person name="Madupu R."/>
            <person name="Daugherty S.C."/>
            <person name="Brinkac L.M."/>
            <person name="Beanan M.J."/>
            <person name="Haft D.H."/>
            <person name="Nelson W.C."/>
            <person name="Davidsen T.M."/>
            <person name="Zafar N."/>
            <person name="Zhou L."/>
            <person name="Liu J."/>
            <person name="Yuan Q."/>
            <person name="Khouri H.M."/>
            <person name="Fedorova N.B."/>
            <person name="Tran B."/>
            <person name="Russell D."/>
            <person name="Berry K.J."/>
            <person name="Utterback T.R."/>
            <person name="Van Aken S.E."/>
            <person name="Feldblyum T.V."/>
            <person name="D'Ascenzo M."/>
            <person name="Deng W.-L."/>
            <person name="Ramos A.R."/>
            <person name="Alfano J.R."/>
            <person name="Cartinhour S."/>
            <person name="Chatterjee A.K."/>
            <person name="Delaney T.P."/>
            <person name="Lazarowitz S.G."/>
            <person name="Martin G.B."/>
            <person name="Schneider D.J."/>
            <person name="Tang X."/>
            <person name="Bender C.L."/>
            <person name="White O."/>
            <person name="Fraser C.M."/>
            <person name="Collmer A."/>
        </authorList>
    </citation>
    <scope>NUCLEOTIDE SEQUENCE [LARGE SCALE GENOMIC DNA]</scope>
    <source>
        <strain>ATCC BAA-871 / DC3000</strain>
    </source>
</reference>
<dbReference type="EC" id="4.2.1.109" evidence="1"/>
<dbReference type="EMBL" id="AE016853">
    <property type="protein sequence ID" value="AAO55563.1"/>
    <property type="molecule type" value="Genomic_DNA"/>
</dbReference>
<dbReference type="RefSeq" id="NP_791868.1">
    <property type="nucleotide sequence ID" value="NC_004578.1"/>
</dbReference>
<dbReference type="RefSeq" id="WP_005616977.1">
    <property type="nucleotide sequence ID" value="NC_004578.1"/>
</dbReference>
<dbReference type="SMR" id="Q884P3"/>
<dbReference type="STRING" id="223283.PSPTO_2045"/>
<dbReference type="GeneID" id="1183690"/>
<dbReference type="KEGG" id="pst:PSPTO_2045"/>
<dbReference type="PATRIC" id="fig|223283.9.peg.2076"/>
<dbReference type="eggNOG" id="COG0235">
    <property type="taxonomic scope" value="Bacteria"/>
</dbReference>
<dbReference type="HOGENOM" id="CLU_006033_4_1_6"/>
<dbReference type="OrthoDB" id="9805559at2"/>
<dbReference type="PhylomeDB" id="Q884P3"/>
<dbReference type="UniPathway" id="UPA00904">
    <property type="reaction ID" value="UER00875"/>
</dbReference>
<dbReference type="Proteomes" id="UP000002515">
    <property type="component" value="Chromosome"/>
</dbReference>
<dbReference type="GO" id="GO:0005737">
    <property type="term" value="C:cytoplasm"/>
    <property type="evidence" value="ECO:0007669"/>
    <property type="project" value="InterPro"/>
</dbReference>
<dbReference type="GO" id="GO:0046570">
    <property type="term" value="F:methylthioribulose 1-phosphate dehydratase activity"/>
    <property type="evidence" value="ECO:0007669"/>
    <property type="project" value="UniProtKB-UniRule"/>
</dbReference>
<dbReference type="GO" id="GO:0008270">
    <property type="term" value="F:zinc ion binding"/>
    <property type="evidence" value="ECO:0007669"/>
    <property type="project" value="UniProtKB-UniRule"/>
</dbReference>
<dbReference type="GO" id="GO:0019509">
    <property type="term" value="P:L-methionine salvage from methylthioadenosine"/>
    <property type="evidence" value="ECO:0007669"/>
    <property type="project" value="UniProtKB-UniRule"/>
</dbReference>
<dbReference type="GO" id="GO:0005996">
    <property type="term" value="P:monosaccharide metabolic process"/>
    <property type="evidence" value="ECO:0007669"/>
    <property type="project" value="UniProtKB-ARBA"/>
</dbReference>
<dbReference type="Gene3D" id="3.40.225.10">
    <property type="entry name" value="Class II aldolase/adducin N-terminal domain"/>
    <property type="match status" value="1"/>
</dbReference>
<dbReference type="HAMAP" id="MF_01677">
    <property type="entry name" value="Salvage_MtnB"/>
    <property type="match status" value="1"/>
</dbReference>
<dbReference type="InterPro" id="IPR001303">
    <property type="entry name" value="Aldolase_II/adducin_N"/>
</dbReference>
<dbReference type="InterPro" id="IPR036409">
    <property type="entry name" value="Aldolase_II/adducin_N_sf"/>
</dbReference>
<dbReference type="InterPro" id="IPR017714">
    <property type="entry name" value="MethylthioRu-1-P_deHdtase_MtnB"/>
</dbReference>
<dbReference type="NCBIfam" id="NF006672">
    <property type="entry name" value="PRK09220.1"/>
    <property type="match status" value="1"/>
</dbReference>
<dbReference type="NCBIfam" id="TIGR03328">
    <property type="entry name" value="salvage_mtnB"/>
    <property type="match status" value="1"/>
</dbReference>
<dbReference type="PANTHER" id="PTHR10640">
    <property type="entry name" value="METHYLTHIORIBULOSE-1-PHOSPHATE DEHYDRATASE"/>
    <property type="match status" value="1"/>
</dbReference>
<dbReference type="PANTHER" id="PTHR10640:SF7">
    <property type="entry name" value="METHYLTHIORIBULOSE-1-PHOSPHATE DEHYDRATASE"/>
    <property type="match status" value="1"/>
</dbReference>
<dbReference type="Pfam" id="PF00596">
    <property type="entry name" value="Aldolase_II"/>
    <property type="match status" value="1"/>
</dbReference>
<dbReference type="SMART" id="SM01007">
    <property type="entry name" value="Aldolase_II"/>
    <property type="match status" value="1"/>
</dbReference>
<dbReference type="SUPFAM" id="SSF53639">
    <property type="entry name" value="AraD/HMP-PK domain-like"/>
    <property type="match status" value="1"/>
</dbReference>
<keyword id="KW-0028">Amino-acid biosynthesis</keyword>
<keyword id="KW-0456">Lyase</keyword>
<keyword id="KW-0479">Metal-binding</keyword>
<keyword id="KW-0486">Methionine biosynthesis</keyword>
<keyword id="KW-1185">Reference proteome</keyword>
<keyword id="KW-0862">Zinc</keyword>
<evidence type="ECO:0000255" key="1">
    <source>
        <dbReference type="HAMAP-Rule" id="MF_01677"/>
    </source>
</evidence>
<sequence>MSREQLSQEIIEAGRFLYGRGWSPATSSNYSVRLSASEALLTVSGKHKGQLGPDDVLATDLAGNSLEPGKKPSAETLLHTQLYLCRPQVGAVLHTHSVNATVLSRLTASDHLVFEDYELQKAFNGVLTHESQVVVPIFDNDQDIARLAANVQPWLDAHPECAGYLIRGHGLYTWGARMSDALRQIEAFEFLFECELKMRTVMNR</sequence>
<gene>
    <name evidence="1" type="primary">mtnB</name>
    <name type="ordered locus">PSPTO_2045</name>
</gene>
<name>MTNB_PSESM</name>
<comment type="function">
    <text evidence="1">Catalyzes the dehydration of methylthioribulose-1-phosphate (MTRu-1-P) into 2,3-diketo-5-methylthiopentyl-1-phosphate (DK-MTP-1-P).</text>
</comment>
<comment type="catalytic activity">
    <reaction evidence="1">
        <text>5-(methylsulfanyl)-D-ribulose 1-phosphate = 5-methylsulfanyl-2,3-dioxopentyl phosphate + H2O</text>
        <dbReference type="Rhea" id="RHEA:15549"/>
        <dbReference type="ChEBI" id="CHEBI:15377"/>
        <dbReference type="ChEBI" id="CHEBI:58548"/>
        <dbReference type="ChEBI" id="CHEBI:58828"/>
        <dbReference type="EC" id="4.2.1.109"/>
    </reaction>
</comment>
<comment type="cofactor">
    <cofactor evidence="1">
        <name>Zn(2+)</name>
        <dbReference type="ChEBI" id="CHEBI:29105"/>
    </cofactor>
    <text evidence="1">Binds 1 zinc ion per subunit.</text>
</comment>
<comment type="pathway">
    <text evidence="1">Amino-acid biosynthesis; L-methionine biosynthesis via salvage pathway; L-methionine from S-methyl-5-thio-alpha-D-ribose 1-phosphate: step 2/6.</text>
</comment>
<comment type="similarity">
    <text evidence="1">Belongs to the aldolase class II family. MtnB subfamily.</text>
</comment>
<feature type="chain" id="PRO_0000357103" description="Methylthioribulose-1-phosphate dehydratase">
    <location>
        <begin position="1"/>
        <end position="204"/>
    </location>
</feature>
<feature type="binding site" evidence="1">
    <location>
        <position position="94"/>
    </location>
    <ligand>
        <name>Zn(2+)</name>
        <dbReference type="ChEBI" id="CHEBI:29105"/>
    </ligand>
</feature>
<feature type="binding site" evidence="1">
    <location>
        <position position="96"/>
    </location>
    <ligand>
        <name>Zn(2+)</name>
        <dbReference type="ChEBI" id="CHEBI:29105"/>
    </ligand>
</feature>
<organism>
    <name type="scientific">Pseudomonas syringae pv. tomato (strain ATCC BAA-871 / DC3000)</name>
    <dbReference type="NCBI Taxonomy" id="223283"/>
    <lineage>
        <taxon>Bacteria</taxon>
        <taxon>Pseudomonadati</taxon>
        <taxon>Pseudomonadota</taxon>
        <taxon>Gammaproteobacteria</taxon>
        <taxon>Pseudomonadales</taxon>
        <taxon>Pseudomonadaceae</taxon>
        <taxon>Pseudomonas</taxon>
    </lineage>
</organism>